<dbReference type="EMBL" id="BX897674">
    <property type="protein sequence ID" value="CAE85528.1"/>
    <property type="molecule type" value="Genomic_DNA"/>
</dbReference>
<dbReference type="EMBL" id="CM002239">
    <property type="protein sequence ID" value="EAA33435.1"/>
    <property type="molecule type" value="Genomic_DNA"/>
</dbReference>
<dbReference type="RefSeq" id="XP_962671.1">
    <property type="nucleotide sequence ID" value="XM_957578.2"/>
</dbReference>
<dbReference type="SMR" id="Q7SAN9"/>
<dbReference type="FunCoup" id="Q7SAN9">
    <property type="interactions" value="73"/>
</dbReference>
<dbReference type="STRING" id="367110.Q7SAN9"/>
<dbReference type="PaxDb" id="5141-EFNCRP00000008293"/>
<dbReference type="EnsemblFungi" id="EAA33435">
    <property type="protein sequence ID" value="EAA33435"/>
    <property type="gene ID" value="NCU08001"/>
</dbReference>
<dbReference type="GeneID" id="3878835"/>
<dbReference type="KEGG" id="ncr:NCU08001"/>
<dbReference type="VEuPathDB" id="FungiDB:NCU08001"/>
<dbReference type="HOGENOM" id="CLU_003661_0_0_1"/>
<dbReference type="InParanoid" id="Q7SAN9"/>
<dbReference type="OMA" id="CHAANQS"/>
<dbReference type="OrthoDB" id="2141925at2759"/>
<dbReference type="Proteomes" id="UP000001805">
    <property type="component" value="Chromosome 4, Linkage Group IV"/>
</dbReference>
<dbReference type="GO" id="GO:0005768">
    <property type="term" value="C:endosome"/>
    <property type="evidence" value="ECO:0000318"/>
    <property type="project" value="GO_Central"/>
</dbReference>
<dbReference type="GO" id="GO:0043328">
    <property type="term" value="P:protein transport to vacuole involved in ubiquitin-dependent protein catabolic process via the multivesicular body sorting pathway"/>
    <property type="evidence" value="ECO:0000318"/>
    <property type="project" value="GO_Central"/>
</dbReference>
<dbReference type="CDD" id="cd09242">
    <property type="entry name" value="BRO1_ScBro1_like"/>
    <property type="match status" value="1"/>
</dbReference>
<dbReference type="CDD" id="cd09237">
    <property type="entry name" value="V_ScBro1_like"/>
    <property type="match status" value="1"/>
</dbReference>
<dbReference type="Gene3D" id="1.20.120.560">
    <property type="entry name" value="alix/aip1 in complex with the ypdl late domain"/>
    <property type="match status" value="1"/>
</dbReference>
<dbReference type="Gene3D" id="1.20.140.50">
    <property type="entry name" value="alix/aip1 like domains"/>
    <property type="match status" value="1"/>
</dbReference>
<dbReference type="Gene3D" id="1.25.40.280">
    <property type="entry name" value="alix/aip1 like domains"/>
    <property type="match status" value="1"/>
</dbReference>
<dbReference type="InterPro" id="IPR025304">
    <property type="entry name" value="ALIX_V_dom"/>
</dbReference>
<dbReference type="InterPro" id="IPR004328">
    <property type="entry name" value="BRO1_dom"/>
</dbReference>
<dbReference type="InterPro" id="IPR038499">
    <property type="entry name" value="BRO1_sf"/>
</dbReference>
<dbReference type="PANTHER" id="PTHR23030">
    <property type="entry name" value="PCD6 INTERACTING PROTEIN-RELATED"/>
    <property type="match status" value="1"/>
</dbReference>
<dbReference type="PANTHER" id="PTHR23030:SF30">
    <property type="entry name" value="TYROSINE-PROTEIN PHOSPHATASE NON-RECEPTOR TYPE 23"/>
    <property type="match status" value="1"/>
</dbReference>
<dbReference type="Pfam" id="PF13949">
    <property type="entry name" value="ALIX_LYPXL_bnd"/>
    <property type="match status" value="1"/>
</dbReference>
<dbReference type="Pfam" id="PF03097">
    <property type="entry name" value="BRO1"/>
    <property type="match status" value="1"/>
</dbReference>
<dbReference type="SMART" id="SM01041">
    <property type="entry name" value="BRO1"/>
    <property type="match status" value="1"/>
</dbReference>
<dbReference type="PROSITE" id="PS51180">
    <property type="entry name" value="BRO1"/>
    <property type="match status" value="1"/>
</dbReference>
<name>BRO1_NEUCR</name>
<gene>
    <name type="primary">bro-1</name>
    <name type="ORF">B2N18.270</name>
    <name type="ORF">NCU08001</name>
</gene>
<accession>Q7SAN9</accession>
<organism>
    <name type="scientific">Neurospora crassa (strain ATCC 24698 / 74-OR23-1A / CBS 708.71 / DSM 1257 / FGSC 987)</name>
    <dbReference type="NCBI Taxonomy" id="367110"/>
    <lineage>
        <taxon>Eukaryota</taxon>
        <taxon>Fungi</taxon>
        <taxon>Dikarya</taxon>
        <taxon>Ascomycota</taxon>
        <taxon>Pezizomycotina</taxon>
        <taxon>Sordariomycetes</taxon>
        <taxon>Sordariomycetidae</taxon>
        <taxon>Sordariales</taxon>
        <taxon>Sordariaceae</taxon>
        <taxon>Neurospora</taxon>
    </lineage>
</organism>
<keyword id="KW-0175">Coiled coil</keyword>
<keyword id="KW-0963">Cytoplasm</keyword>
<keyword id="KW-0967">Endosome</keyword>
<keyword id="KW-0653">Protein transport</keyword>
<keyword id="KW-1185">Reference proteome</keyword>
<keyword id="KW-0813">Transport</keyword>
<comment type="function">
    <text evidence="1">Involved in concentration and sorting of cargo proteins of the multivesicular body (MVB) for incorporation into intralumenal vesicles.</text>
</comment>
<comment type="subcellular location">
    <subcellularLocation>
        <location evidence="1">Cytoplasm</location>
    </subcellularLocation>
    <subcellularLocation>
        <location evidence="1">Endosome</location>
    </subcellularLocation>
</comment>
<comment type="similarity">
    <text evidence="5">Belongs to the BRO1 family.</text>
</comment>
<protein>
    <recommendedName>
        <fullName>Vacuolar protein-sorting protein bro-1</fullName>
    </recommendedName>
    <alternativeName>
        <fullName>BRO domain-containing protein 1</fullName>
    </alternativeName>
</protein>
<proteinExistence type="inferred from homology"/>
<sequence length="1012" mass="112195">MVQAPMISVPLKATSEIDWVAPLKNYIRNTYGDDPERYAEECATLNRLRQDMRGAGKDSTSGRDLLYRYYGQLELLDLRFPVDEKNIKISFTWFDAFTHKPTAQYSLAFEKASIIFNISAVLSCHAAHQLRTEEAGLKTAYHSFQASAGMFTYINENFLHAPSSDLSRETVKTLISIMLAQAQEVFLEKQIADQKKNGLLAKLSSQAAALYAQAVEGVQENVTKAIFEKVWLSVVQIKLNFMNSLAQYYQALADEDANSYGVAIARLEIAQGLAKEANKMAHSFPTSVPPNSNLTSDCGHILADATKRHLATVKEKLEELNKENDMIYHQPVPAEASVAPVPKLPAAKPIPVSELYAGQDIQRITGPDLFAKIVPLAVTESASLYDEEKAKLVRAETERVETANSEMAASLDYLRLPGALQVLKGGFDQDILPDEDFRTWCVDVADHESPHRIFEYLHTEKQAISTILDKSSRQLDMEESVCEKMRSKYDAEWTQQPSSRLTTTLRTDIRRYREALEVAAKSDGQLATKLRANETELDEMRQAAQHGEIDELFQRAVRKSRKSNPNSPATVEPNLLEADFDDGGPSVVEQIQKVEDILKKLSLVKKERLQVLQDLKQKAHSDDISQILILNKKSIANYEQQLFQQELEKFRPHQNRLVQASHKQAALMRELTVTFNNLLQDKRVRADQSRYESVQRSRTSVINKYKRAYQEFLDLEAGLQSAKNWYKDMRQEAESLEKNVEAFVNNRRAEGAQLLNQIEQDRAANKSSHAALEQERLKNLMERMSMDPSPTSPKPSSGSGGRPTPAPLSFAPAAVSNTPLSAYQKSNFSTQYPASPPATQVPHNPGGQQQTPYQQYNPSSLGRIPGPASPPPNQTSFNIGPGRHPASPPPTQTSFAQSRPYSLTTYGNPSALNPQGGQPQQSQPGGYVPPGFVPPPPPPGPPPLGPQQTVHYGGNEYYAGAMGNPNIGRPGSGQQGPQGQQGGWGQPPPQQQLYQQQGGGGGDPWAGLSAWK</sequence>
<reference key="1">
    <citation type="journal article" date="2003" name="Nucleic Acids Res.">
        <title>What's in the genome of a filamentous fungus? Analysis of the Neurospora genome sequence.</title>
        <authorList>
            <person name="Mannhaupt G."/>
            <person name="Montrone C."/>
            <person name="Haase D."/>
            <person name="Mewes H.-W."/>
            <person name="Aign V."/>
            <person name="Hoheisel J.D."/>
            <person name="Fartmann B."/>
            <person name="Nyakatura G."/>
            <person name="Kempken F."/>
            <person name="Maier J."/>
            <person name="Schulte U."/>
        </authorList>
    </citation>
    <scope>NUCLEOTIDE SEQUENCE [LARGE SCALE GENOMIC DNA]</scope>
    <source>
        <strain>ATCC 24698 / 74-OR23-1A / CBS 708.71 / DSM 1257 / FGSC 987</strain>
    </source>
</reference>
<reference key="2">
    <citation type="journal article" date="2003" name="Nature">
        <title>The genome sequence of the filamentous fungus Neurospora crassa.</title>
        <authorList>
            <person name="Galagan J.E."/>
            <person name="Calvo S.E."/>
            <person name="Borkovich K.A."/>
            <person name="Selker E.U."/>
            <person name="Read N.D."/>
            <person name="Jaffe D.B."/>
            <person name="FitzHugh W."/>
            <person name="Ma L.-J."/>
            <person name="Smirnov S."/>
            <person name="Purcell S."/>
            <person name="Rehman B."/>
            <person name="Elkins T."/>
            <person name="Engels R."/>
            <person name="Wang S."/>
            <person name="Nielsen C.B."/>
            <person name="Butler J."/>
            <person name="Endrizzi M."/>
            <person name="Qui D."/>
            <person name="Ianakiev P."/>
            <person name="Bell-Pedersen D."/>
            <person name="Nelson M.A."/>
            <person name="Werner-Washburne M."/>
            <person name="Selitrennikoff C.P."/>
            <person name="Kinsey J.A."/>
            <person name="Braun E.L."/>
            <person name="Zelter A."/>
            <person name="Schulte U."/>
            <person name="Kothe G.O."/>
            <person name="Jedd G."/>
            <person name="Mewes H.-W."/>
            <person name="Staben C."/>
            <person name="Marcotte E."/>
            <person name="Greenberg D."/>
            <person name="Roy A."/>
            <person name="Foley K."/>
            <person name="Naylor J."/>
            <person name="Stange-Thomann N."/>
            <person name="Barrett R."/>
            <person name="Gnerre S."/>
            <person name="Kamal M."/>
            <person name="Kamvysselis M."/>
            <person name="Mauceli E.W."/>
            <person name="Bielke C."/>
            <person name="Rudd S."/>
            <person name="Frishman D."/>
            <person name="Krystofova S."/>
            <person name="Rasmussen C."/>
            <person name="Metzenberg R.L."/>
            <person name="Perkins D.D."/>
            <person name="Kroken S."/>
            <person name="Cogoni C."/>
            <person name="Macino G."/>
            <person name="Catcheside D.E.A."/>
            <person name="Li W."/>
            <person name="Pratt R.J."/>
            <person name="Osmani S.A."/>
            <person name="DeSouza C.P.C."/>
            <person name="Glass N.L."/>
            <person name="Orbach M.J."/>
            <person name="Berglund J.A."/>
            <person name="Voelker R."/>
            <person name="Yarden O."/>
            <person name="Plamann M."/>
            <person name="Seiler S."/>
            <person name="Dunlap J.C."/>
            <person name="Radford A."/>
            <person name="Aramayo R."/>
            <person name="Natvig D.O."/>
            <person name="Alex L.A."/>
            <person name="Mannhaupt G."/>
            <person name="Ebbole D.J."/>
            <person name="Freitag M."/>
            <person name="Paulsen I."/>
            <person name="Sachs M.S."/>
            <person name="Lander E.S."/>
            <person name="Nusbaum C."/>
            <person name="Birren B.W."/>
        </authorList>
    </citation>
    <scope>NUCLEOTIDE SEQUENCE [LARGE SCALE GENOMIC DNA]</scope>
    <source>
        <strain>ATCC 24698 / 74-OR23-1A / CBS 708.71 / DSM 1257 / FGSC 987</strain>
    </source>
</reference>
<evidence type="ECO:0000250" key="1"/>
<evidence type="ECO:0000255" key="2"/>
<evidence type="ECO:0000255" key="3">
    <source>
        <dbReference type="PROSITE-ProRule" id="PRU00526"/>
    </source>
</evidence>
<evidence type="ECO:0000256" key="4">
    <source>
        <dbReference type="SAM" id="MobiDB-lite"/>
    </source>
</evidence>
<evidence type="ECO:0000305" key="5"/>
<feature type="chain" id="PRO_0000218868" description="Vacuolar protein-sorting protein bro-1">
    <location>
        <begin position="1"/>
        <end position="1012"/>
    </location>
</feature>
<feature type="domain" description="BRO1" evidence="3">
    <location>
        <begin position="5"/>
        <end position="407"/>
    </location>
</feature>
<feature type="region of interest" description="Disordered" evidence="4">
    <location>
        <begin position="558"/>
        <end position="578"/>
    </location>
</feature>
<feature type="region of interest" description="Disordered" evidence="4">
    <location>
        <begin position="784"/>
        <end position="812"/>
    </location>
</feature>
<feature type="region of interest" description="Disordered" evidence="4">
    <location>
        <begin position="827"/>
        <end position="1012"/>
    </location>
</feature>
<feature type="coiled-coil region" evidence="2">
    <location>
        <begin position="301"/>
        <end position="330"/>
    </location>
</feature>
<feature type="coiled-coil region" evidence="2">
    <location>
        <begin position="719"/>
        <end position="775"/>
    </location>
</feature>
<feature type="compositionally biased region" description="Polar residues" evidence="4">
    <location>
        <begin position="827"/>
        <end position="842"/>
    </location>
</feature>
<feature type="compositionally biased region" description="Low complexity" evidence="4">
    <location>
        <begin position="844"/>
        <end position="857"/>
    </location>
</feature>
<feature type="compositionally biased region" description="Polar residues" evidence="4">
    <location>
        <begin position="892"/>
        <end position="913"/>
    </location>
</feature>
<feature type="compositionally biased region" description="Low complexity" evidence="4">
    <location>
        <begin position="914"/>
        <end position="930"/>
    </location>
</feature>
<feature type="compositionally biased region" description="Pro residues" evidence="4">
    <location>
        <begin position="931"/>
        <end position="945"/>
    </location>
</feature>
<feature type="compositionally biased region" description="Gly residues" evidence="4">
    <location>
        <begin position="970"/>
        <end position="985"/>
    </location>
</feature>